<sequence length="71" mass="8677">MPSIKVRENEPFDIALRRFRRTCDRAGVITDVRKKEFYEKPTWVNKRMKAAAVKRTHKEMAKNRVHRKRMY</sequence>
<dbReference type="EMBL" id="CP000488">
    <property type="protein sequence ID" value="ABL01984.1"/>
    <property type="molecule type" value="Genomic_DNA"/>
</dbReference>
<dbReference type="RefSeq" id="WP_011737609.1">
    <property type="nucleotide sequence ID" value="NC_008610.1"/>
</dbReference>
<dbReference type="SMR" id="A1AVM7"/>
<dbReference type="STRING" id="413404.Rmag_0192"/>
<dbReference type="KEGG" id="rma:Rmag_0192"/>
<dbReference type="eggNOG" id="COG0828">
    <property type="taxonomic scope" value="Bacteria"/>
</dbReference>
<dbReference type="HOGENOM" id="CLU_159258_1_0_6"/>
<dbReference type="OrthoDB" id="9799244at2"/>
<dbReference type="Proteomes" id="UP000002587">
    <property type="component" value="Chromosome"/>
</dbReference>
<dbReference type="GO" id="GO:1990904">
    <property type="term" value="C:ribonucleoprotein complex"/>
    <property type="evidence" value="ECO:0007669"/>
    <property type="project" value="UniProtKB-KW"/>
</dbReference>
<dbReference type="GO" id="GO:0005840">
    <property type="term" value="C:ribosome"/>
    <property type="evidence" value="ECO:0007669"/>
    <property type="project" value="UniProtKB-KW"/>
</dbReference>
<dbReference type="GO" id="GO:0003735">
    <property type="term" value="F:structural constituent of ribosome"/>
    <property type="evidence" value="ECO:0007669"/>
    <property type="project" value="InterPro"/>
</dbReference>
<dbReference type="GO" id="GO:0006412">
    <property type="term" value="P:translation"/>
    <property type="evidence" value="ECO:0007669"/>
    <property type="project" value="UniProtKB-UniRule"/>
</dbReference>
<dbReference type="Gene3D" id="1.20.5.1150">
    <property type="entry name" value="Ribosomal protein S8"/>
    <property type="match status" value="1"/>
</dbReference>
<dbReference type="HAMAP" id="MF_00358">
    <property type="entry name" value="Ribosomal_bS21"/>
    <property type="match status" value="1"/>
</dbReference>
<dbReference type="InterPro" id="IPR001911">
    <property type="entry name" value="Ribosomal_bS21"/>
</dbReference>
<dbReference type="InterPro" id="IPR038380">
    <property type="entry name" value="Ribosomal_bS21_sf"/>
</dbReference>
<dbReference type="NCBIfam" id="TIGR00030">
    <property type="entry name" value="S21p"/>
    <property type="match status" value="1"/>
</dbReference>
<dbReference type="PANTHER" id="PTHR21109">
    <property type="entry name" value="MITOCHONDRIAL 28S RIBOSOMAL PROTEIN S21"/>
    <property type="match status" value="1"/>
</dbReference>
<dbReference type="PANTHER" id="PTHR21109:SF22">
    <property type="entry name" value="SMALL RIBOSOMAL SUBUNIT PROTEIN BS21"/>
    <property type="match status" value="1"/>
</dbReference>
<dbReference type="Pfam" id="PF01165">
    <property type="entry name" value="Ribosomal_S21"/>
    <property type="match status" value="1"/>
</dbReference>
<dbReference type="PRINTS" id="PR00976">
    <property type="entry name" value="RIBOSOMALS21"/>
</dbReference>
<organism>
    <name type="scientific">Ruthia magnifica subsp. Calyptogena magnifica</name>
    <dbReference type="NCBI Taxonomy" id="413404"/>
    <lineage>
        <taxon>Bacteria</taxon>
        <taxon>Pseudomonadati</taxon>
        <taxon>Pseudomonadota</taxon>
        <taxon>Gammaproteobacteria</taxon>
        <taxon>Candidatus Pseudothioglobaceae</taxon>
        <taxon>Candidatus Ruthturnera</taxon>
    </lineage>
</organism>
<feature type="chain" id="PRO_1000005167" description="Small ribosomal subunit protein bS21">
    <location>
        <begin position="1"/>
        <end position="71"/>
    </location>
</feature>
<name>RS21_RUTMC</name>
<reference key="1">
    <citation type="journal article" date="2007" name="Science">
        <title>The Calyptogena magnifica chemoautotrophic symbiont genome.</title>
        <authorList>
            <person name="Newton I.L.G."/>
            <person name="Woyke T."/>
            <person name="Auchtung T.A."/>
            <person name="Dilly G.F."/>
            <person name="Dutton R.J."/>
            <person name="Fisher M.C."/>
            <person name="Fontanez K.M."/>
            <person name="Lau E."/>
            <person name="Stewart F.J."/>
            <person name="Richardson P.M."/>
            <person name="Barry K.W."/>
            <person name="Saunders E."/>
            <person name="Detter J.C."/>
            <person name="Wu D."/>
            <person name="Eisen J.A."/>
            <person name="Cavanaugh C.M."/>
        </authorList>
    </citation>
    <scope>NUCLEOTIDE SEQUENCE [LARGE SCALE GENOMIC DNA]</scope>
</reference>
<proteinExistence type="inferred from homology"/>
<keyword id="KW-0687">Ribonucleoprotein</keyword>
<keyword id="KW-0689">Ribosomal protein</keyword>
<gene>
    <name evidence="1" type="primary">rpsU</name>
    <name type="ordered locus">Rmag_0192</name>
</gene>
<protein>
    <recommendedName>
        <fullName evidence="1">Small ribosomal subunit protein bS21</fullName>
    </recommendedName>
    <alternativeName>
        <fullName evidence="2">30S ribosomal protein S21</fullName>
    </alternativeName>
</protein>
<comment type="similarity">
    <text evidence="1">Belongs to the bacterial ribosomal protein bS21 family.</text>
</comment>
<accession>A1AVM7</accession>
<evidence type="ECO:0000255" key="1">
    <source>
        <dbReference type="HAMAP-Rule" id="MF_00358"/>
    </source>
</evidence>
<evidence type="ECO:0000305" key="2"/>